<feature type="signal peptide" evidence="3">
    <location>
        <begin position="1"/>
        <end position="24"/>
    </location>
</feature>
<feature type="propeptide" id="PRO_0000435249" description="Activation peptide" evidence="1">
    <location>
        <begin position="25"/>
        <end position="110"/>
    </location>
</feature>
<feature type="chain" id="PRO_5004310879" description="Subtilisin-like protease SBT4.12" evidence="3">
    <location>
        <begin position="111"/>
        <end status="unknown"/>
    </location>
</feature>
<feature type="propeptide" id="PRO_0000435250" evidence="1">
    <location>
        <begin status="unknown"/>
        <end position="736"/>
    </location>
</feature>
<feature type="domain" description="Inhibitor I9" evidence="3">
    <location>
        <begin position="32"/>
        <end position="110"/>
    </location>
</feature>
<feature type="domain" description="Peptidase S8" evidence="5">
    <location>
        <begin position="114"/>
        <end position="580"/>
    </location>
</feature>
<feature type="domain" description="PA" evidence="3">
    <location>
        <begin position="353"/>
        <end position="437"/>
    </location>
</feature>
<feature type="active site" description="Charge relay system" evidence="5">
    <location>
        <position position="142"/>
    </location>
</feature>
<feature type="active site" description="Charge relay system" evidence="5">
    <location>
        <position position="197"/>
    </location>
</feature>
<feature type="active site" description="Charge relay system" evidence="5">
    <location>
        <position position="519"/>
    </location>
</feature>
<feature type="glycosylation site" description="N-linked (GlcNAc...) asparagine" evidence="4">
    <location>
        <position position="173"/>
    </location>
</feature>
<feature type="glycosylation site" description="N-linked (GlcNAc...) asparagine" evidence="4">
    <location>
        <position position="220"/>
    </location>
</feature>
<feature type="glycosylation site" description="N-linked (GlcNAc...) asparagine" evidence="4">
    <location>
        <position position="381"/>
    </location>
</feature>
<feature type="glycosylation site" description="N-linked (GlcNAc...) asparagine" evidence="4">
    <location>
        <position position="459"/>
    </location>
</feature>
<feature type="glycosylation site" description="N-linked (GlcNAc...) asparagine" evidence="4">
    <location>
        <position position="601"/>
    </location>
</feature>
<feature type="glycosylation site" description="N-linked (GlcNAc...) asparagine" evidence="4">
    <location>
        <position position="649"/>
    </location>
</feature>
<feature type="glycosylation site" description="N-linked (GlcNAc...) asparagine" evidence="4">
    <location>
        <position position="659"/>
    </location>
</feature>
<protein>
    <recommendedName>
        <fullName evidence="8">Subtilisin-like protease SBT4.12</fullName>
        <ecNumber evidence="6">3.4.21.-</ecNumber>
    </recommendedName>
    <alternativeName>
        <fullName evidence="8">Subtilase subfamily 4 member 12</fullName>
        <shortName evidence="8">AtSBT4.12</shortName>
    </alternativeName>
</protein>
<sequence length="736" mass="78097">MANLAASTCLYSWLLVLLLSSVSAIIDEDTQVYIVYMGSLSSRADYIPTSDHMSILQQVTGESSIEGRLVRSYKRSFNGFAARLTESERTLIAEIEGVVSVFPNKILQLHTTTSWDFMGVKEGKNTKRNLAIESDTIIGVIDTGIWPESKSFSDKGFGPPPKKWKGVCSGGKNFTCNNKLIGARDYTSEGTRDTSGHGTHTASTAAGNAVKDTSFFGIGNGTVRGGVPASRIAAYKVCTDSGCSSEALLSSFDDAIADGVDLITISIGFQFPSIFEDDPIAIGAFHAMAKGILTVSSAGNSGPKPTTVSHVAPWIFTVAASTTNRGFITKVVLGNGKTLAGRSVNAFDMKGKKYPLVYGKSAASSACDAKTAALCAPACLNKSRVKGKILVCGGPSGYKIAKSVGAIAIIDKSPRPDVAFTHHLPASGLKAKDFKSLVSYIESQDSPQAAVLKTETIFNRTSPVIASFSSRGPNTIAVDILKPDITAPGVEILAAFSPNGEPSEDDTRRVKYSVFSGTSMACPHVAGVAAYVKTFYPRWSPSMIQSAIMTTAWPVKAKGRGIASTEFAYGAGHVDPMAALNPGLVYELDKADHIAFLCGMNYTSKTLKIISGDTVKCSKKNKILPRNLNYPSMSAKLSGTDSTFSVTFNRTLTNVGTPNSTYKSKVVAGHGSKLSIKVTPSVLYFKTVNEKQSFSVTVTGSDVDSEVPSSANLIWSDGTHNVRSPIVVYIMVVDEA</sequence>
<reference key="1">
    <citation type="journal article" date="2000" name="DNA Res.">
        <title>Structural analysis of Arabidopsis thaliana chromosome 5. X. Sequence features of the regions of 3,076,755 bp covered by sixty P1 and TAC clones.</title>
        <authorList>
            <person name="Sato S."/>
            <person name="Nakamura Y."/>
            <person name="Kaneko T."/>
            <person name="Katoh T."/>
            <person name="Asamizu E."/>
            <person name="Kotani H."/>
            <person name="Tabata S."/>
        </authorList>
    </citation>
    <scope>NUCLEOTIDE SEQUENCE [LARGE SCALE GENOMIC DNA]</scope>
    <source>
        <strain>cv. Columbia</strain>
    </source>
</reference>
<reference key="2">
    <citation type="journal article" date="2017" name="Plant J.">
        <title>Araport11: a complete reannotation of the Arabidopsis thaliana reference genome.</title>
        <authorList>
            <person name="Cheng C.Y."/>
            <person name="Krishnakumar V."/>
            <person name="Chan A.P."/>
            <person name="Thibaud-Nissen F."/>
            <person name="Schobel S."/>
            <person name="Town C.D."/>
        </authorList>
    </citation>
    <scope>GENOME REANNOTATION</scope>
    <source>
        <strain>cv. Columbia</strain>
    </source>
</reference>
<reference key="3">
    <citation type="journal article" date="2003" name="Science">
        <title>Empirical analysis of transcriptional activity in the Arabidopsis genome.</title>
        <authorList>
            <person name="Yamada K."/>
            <person name="Lim J."/>
            <person name="Dale J.M."/>
            <person name="Chen H."/>
            <person name="Shinn P."/>
            <person name="Palm C.J."/>
            <person name="Southwick A.M."/>
            <person name="Wu H.C."/>
            <person name="Kim C.J."/>
            <person name="Nguyen M."/>
            <person name="Pham P.K."/>
            <person name="Cheuk R.F."/>
            <person name="Karlin-Newmann G."/>
            <person name="Liu S.X."/>
            <person name="Lam B."/>
            <person name="Sakano H."/>
            <person name="Wu T."/>
            <person name="Yu G."/>
            <person name="Miranda M."/>
            <person name="Quach H.L."/>
            <person name="Tripp M."/>
            <person name="Chang C.H."/>
            <person name="Lee J.M."/>
            <person name="Toriumi M.J."/>
            <person name="Chan M.M."/>
            <person name="Tang C.C."/>
            <person name="Onodera C.S."/>
            <person name="Deng J.M."/>
            <person name="Akiyama K."/>
            <person name="Ansari Y."/>
            <person name="Arakawa T."/>
            <person name="Banh J."/>
            <person name="Banno F."/>
            <person name="Bowser L."/>
            <person name="Brooks S.Y."/>
            <person name="Carninci P."/>
            <person name="Chao Q."/>
            <person name="Choy N."/>
            <person name="Enju A."/>
            <person name="Goldsmith A.D."/>
            <person name="Gurjal M."/>
            <person name="Hansen N.F."/>
            <person name="Hayashizaki Y."/>
            <person name="Johnson-Hopson C."/>
            <person name="Hsuan V.W."/>
            <person name="Iida K."/>
            <person name="Karnes M."/>
            <person name="Khan S."/>
            <person name="Koesema E."/>
            <person name="Ishida J."/>
            <person name="Jiang P.X."/>
            <person name="Jones T."/>
            <person name="Kawai J."/>
            <person name="Kamiya A."/>
            <person name="Meyers C."/>
            <person name="Nakajima M."/>
            <person name="Narusaka M."/>
            <person name="Seki M."/>
            <person name="Sakurai T."/>
            <person name="Satou M."/>
            <person name="Tamse R."/>
            <person name="Vaysberg M."/>
            <person name="Wallender E.K."/>
            <person name="Wong C."/>
            <person name="Yamamura Y."/>
            <person name="Yuan S."/>
            <person name="Shinozaki K."/>
            <person name="Davis R.W."/>
            <person name="Theologis A."/>
            <person name="Ecker J.R."/>
        </authorList>
    </citation>
    <scope>NUCLEOTIDE SEQUENCE [LARGE SCALE MRNA]</scope>
    <source>
        <strain>cv. Columbia</strain>
    </source>
</reference>
<reference key="4">
    <citation type="journal article" date="2005" name="PLoS Comput. Biol.">
        <title>Inferring hypotheses on functional relationships of genes: Analysis of the Arabidopsis thaliana subtilase gene family.</title>
        <authorList>
            <person name="Rautengarten C."/>
            <person name="Steinhauser D."/>
            <person name="Bussis D."/>
            <person name="Stintzi A."/>
            <person name="Schaller A."/>
            <person name="Kopka J."/>
            <person name="Altmann T."/>
        </authorList>
    </citation>
    <scope>GENE FAMILY</scope>
    <scope>NOMENCLATURE</scope>
</reference>
<reference key="5">
    <citation type="journal article" date="2009" name="Physiol. Plantarum">
        <title>Identification of Arabidopsis subtilisin-like serine protease specifically expressed in root stele by gene trapping.</title>
        <authorList>
            <person name="Kuroha T."/>
            <person name="Okuda A."/>
            <person name="Arai M."/>
            <person name="Komatsu Y."/>
            <person name="Sato S."/>
            <person name="Kato T."/>
            <person name="Tabata S."/>
            <person name="Satoh S."/>
        </authorList>
    </citation>
    <scope>TISSUE SPECIFICITY</scope>
    <scope>INDUCTION BY JASMONATE</scope>
    <source>
        <strain>cv. Columbia</strain>
    </source>
</reference>
<comment type="subcellular location">
    <subcellularLocation>
        <location evidence="2">Secreted</location>
    </subcellularLocation>
</comment>
<comment type="alternative products">
    <event type="alternative splicing"/>
    <isoform>
        <id>Q8L7D2-1</id>
        <name>1</name>
        <sequence type="displayed"/>
    </isoform>
    <text evidence="9">Additional isoforms seem to exist.</text>
</comment>
<comment type="tissue specificity">
    <text evidence="7">Specifically expressed in root stele of the root hair zone.</text>
</comment>
<comment type="induction">
    <text evidence="7">Accumulates in roots after methyl jasmonate (MeJA) treatment.</text>
</comment>
<comment type="PTM">
    <text evidence="1">The C-terminal propeptide is autocleaved.</text>
</comment>
<comment type="similarity">
    <text evidence="9">Belongs to the peptidase S8 family.</text>
</comment>
<comment type="sequence caution" evidence="9">
    <conflict type="erroneous gene model prediction">
        <sequence resource="EMBL-CDS" id="BAB10784"/>
    </conflict>
</comment>
<organism evidence="11">
    <name type="scientific">Arabidopsis thaliana</name>
    <name type="common">Mouse-ear cress</name>
    <dbReference type="NCBI Taxonomy" id="3702"/>
    <lineage>
        <taxon>Eukaryota</taxon>
        <taxon>Viridiplantae</taxon>
        <taxon>Streptophyta</taxon>
        <taxon>Embryophyta</taxon>
        <taxon>Tracheophyta</taxon>
        <taxon>Spermatophyta</taxon>
        <taxon>Magnoliopsida</taxon>
        <taxon>eudicotyledons</taxon>
        <taxon>Gunneridae</taxon>
        <taxon>Pentapetalae</taxon>
        <taxon>rosids</taxon>
        <taxon>malvids</taxon>
        <taxon>Brassicales</taxon>
        <taxon>Brassicaceae</taxon>
        <taxon>Camelineae</taxon>
        <taxon>Arabidopsis</taxon>
    </lineage>
</organism>
<keyword id="KW-0025">Alternative splicing</keyword>
<keyword id="KW-0068">Autocatalytic cleavage</keyword>
<keyword id="KW-0325">Glycoprotein</keyword>
<keyword id="KW-0378">Hydrolase</keyword>
<keyword id="KW-0645">Protease</keyword>
<keyword id="KW-1185">Reference proteome</keyword>
<keyword id="KW-0964">Secreted</keyword>
<keyword id="KW-0720">Serine protease</keyword>
<keyword id="KW-0732">Signal</keyword>
<keyword id="KW-0865">Zymogen</keyword>
<gene>
    <name evidence="8" type="primary">SBT4.12</name>
    <name evidence="10" type="ordered locus">At5g59090</name>
    <name evidence="12" type="ORF">K18B18.9</name>
</gene>
<accession>Q8L7D2</accession>
<accession>Q9FGU4</accession>
<dbReference type="EC" id="3.4.21.-" evidence="6"/>
<dbReference type="EMBL" id="AB024027">
    <property type="protein sequence ID" value="BAB10784.1"/>
    <property type="status" value="ALT_SEQ"/>
    <property type="molecule type" value="Genomic_DNA"/>
</dbReference>
<dbReference type="EMBL" id="CP002688">
    <property type="protein sequence ID" value="AED97139.1"/>
    <property type="molecule type" value="Genomic_DNA"/>
</dbReference>
<dbReference type="EMBL" id="AY136334">
    <property type="protein sequence ID" value="AAM97000.1"/>
    <property type="molecule type" value="mRNA"/>
</dbReference>
<dbReference type="EMBL" id="BT000127">
    <property type="protein sequence ID" value="AAN15446.1"/>
    <property type="molecule type" value="mRNA"/>
</dbReference>
<dbReference type="RefSeq" id="NP_568895.1">
    <molecule id="Q8L7D2-1"/>
    <property type="nucleotide sequence ID" value="NM_125299.3"/>
</dbReference>
<dbReference type="SMR" id="Q8L7D2"/>
<dbReference type="FunCoup" id="Q8L7D2">
    <property type="interactions" value="44"/>
</dbReference>
<dbReference type="STRING" id="3702.Q8L7D2"/>
<dbReference type="MEROPS" id="S08.A20"/>
<dbReference type="GlyCosmos" id="Q8L7D2">
    <property type="glycosylation" value="7 sites, No reported glycans"/>
</dbReference>
<dbReference type="GlyGen" id="Q8L7D2">
    <property type="glycosylation" value="7 sites"/>
</dbReference>
<dbReference type="iPTMnet" id="Q8L7D2"/>
<dbReference type="PaxDb" id="3702-AT5G59090.1"/>
<dbReference type="ProteomicsDB" id="232900">
    <molecule id="Q8L7D2-1"/>
</dbReference>
<dbReference type="EnsemblPlants" id="AT5G59090.1">
    <molecule id="Q8L7D2-1"/>
    <property type="protein sequence ID" value="AT5G59090.1"/>
    <property type="gene ID" value="AT5G59090"/>
</dbReference>
<dbReference type="GeneID" id="836026"/>
<dbReference type="Gramene" id="AT5G59090.1">
    <molecule id="Q8L7D2-1"/>
    <property type="protein sequence ID" value="AT5G59090.1"/>
    <property type="gene ID" value="AT5G59090"/>
</dbReference>
<dbReference type="KEGG" id="ath:AT5G59090"/>
<dbReference type="Araport" id="AT5G59090"/>
<dbReference type="TAIR" id="AT5G59090">
    <property type="gene designation" value="SBT4.12"/>
</dbReference>
<dbReference type="eggNOG" id="ENOG502QRA7">
    <property type="taxonomic scope" value="Eukaryota"/>
</dbReference>
<dbReference type="InParanoid" id="Q8L7D2"/>
<dbReference type="OMA" id="KKCLARC"/>
<dbReference type="PhylomeDB" id="Q8L7D2"/>
<dbReference type="PRO" id="PR:Q8L7D2"/>
<dbReference type="Proteomes" id="UP000006548">
    <property type="component" value="Chromosome 5"/>
</dbReference>
<dbReference type="ExpressionAtlas" id="Q8L7D2">
    <property type="expression patterns" value="baseline and differential"/>
</dbReference>
<dbReference type="GO" id="GO:0005737">
    <property type="term" value="C:cytoplasm"/>
    <property type="evidence" value="ECO:0007005"/>
    <property type="project" value="TAIR"/>
</dbReference>
<dbReference type="GO" id="GO:0005576">
    <property type="term" value="C:extracellular region"/>
    <property type="evidence" value="ECO:0007669"/>
    <property type="project" value="UniProtKB-SubCell"/>
</dbReference>
<dbReference type="GO" id="GO:0005634">
    <property type="term" value="C:nucleus"/>
    <property type="evidence" value="ECO:0007005"/>
    <property type="project" value="TAIR"/>
</dbReference>
<dbReference type="GO" id="GO:0004252">
    <property type="term" value="F:serine-type endopeptidase activity"/>
    <property type="evidence" value="ECO:0007669"/>
    <property type="project" value="InterPro"/>
</dbReference>
<dbReference type="GO" id="GO:0006508">
    <property type="term" value="P:proteolysis"/>
    <property type="evidence" value="ECO:0007669"/>
    <property type="project" value="UniProtKB-KW"/>
</dbReference>
<dbReference type="GO" id="GO:0009753">
    <property type="term" value="P:response to jasmonic acid"/>
    <property type="evidence" value="ECO:0000270"/>
    <property type="project" value="UniProtKB"/>
</dbReference>
<dbReference type="CDD" id="cd02120">
    <property type="entry name" value="PA_subtilisin_like"/>
    <property type="match status" value="1"/>
</dbReference>
<dbReference type="CDD" id="cd04852">
    <property type="entry name" value="Peptidases_S8_3"/>
    <property type="match status" value="1"/>
</dbReference>
<dbReference type="FunFam" id="2.60.40.2310:FF:000001">
    <property type="entry name" value="Subtilisin-like protease SBT1.5"/>
    <property type="match status" value="1"/>
</dbReference>
<dbReference type="FunFam" id="3.30.70.80:FF:000002">
    <property type="entry name" value="Subtilisin-like protease SBT5.3"/>
    <property type="match status" value="1"/>
</dbReference>
<dbReference type="Gene3D" id="2.60.40.2310">
    <property type="match status" value="1"/>
</dbReference>
<dbReference type="Gene3D" id="3.50.30.30">
    <property type="match status" value="1"/>
</dbReference>
<dbReference type="Gene3D" id="3.30.70.80">
    <property type="entry name" value="Peptidase S8 propeptide/proteinase inhibitor I9"/>
    <property type="match status" value="1"/>
</dbReference>
<dbReference type="Gene3D" id="3.40.50.200">
    <property type="entry name" value="Peptidase S8/S53 domain"/>
    <property type="match status" value="1"/>
</dbReference>
<dbReference type="InterPro" id="IPR000209">
    <property type="entry name" value="Peptidase_S8/S53_dom"/>
</dbReference>
<dbReference type="InterPro" id="IPR036852">
    <property type="entry name" value="Peptidase_S8/S53_dom_sf"/>
</dbReference>
<dbReference type="InterPro" id="IPR023828">
    <property type="entry name" value="Peptidase_S8_Ser-AS"/>
</dbReference>
<dbReference type="InterPro" id="IPR015500">
    <property type="entry name" value="Peptidase_S8_subtilisin-rel"/>
</dbReference>
<dbReference type="InterPro" id="IPR034197">
    <property type="entry name" value="Peptidases_S8_3"/>
</dbReference>
<dbReference type="InterPro" id="IPR010259">
    <property type="entry name" value="S8pro/Inhibitor_I9"/>
</dbReference>
<dbReference type="InterPro" id="IPR037045">
    <property type="entry name" value="S8pro/Inhibitor_I9_sf"/>
</dbReference>
<dbReference type="InterPro" id="IPR045051">
    <property type="entry name" value="SBT"/>
</dbReference>
<dbReference type="InterPro" id="IPR041469">
    <property type="entry name" value="Subtilisin-like_FN3"/>
</dbReference>
<dbReference type="PANTHER" id="PTHR10795">
    <property type="entry name" value="PROPROTEIN CONVERTASE SUBTILISIN/KEXIN"/>
    <property type="match status" value="1"/>
</dbReference>
<dbReference type="Pfam" id="PF17766">
    <property type="entry name" value="fn3_6"/>
    <property type="match status" value="1"/>
</dbReference>
<dbReference type="Pfam" id="PF05922">
    <property type="entry name" value="Inhibitor_I9"/>
    <property type="match status" value="1"/>
</dbReference>
<dbReference type="Pfam" id="PF00082">
    <property type="entry name" value="Peptidase_S8"/>
    <property type="match status" value="1"/>
</dbReference>
<dbReference type="PRINTS" id="PR00723">
    <property type="entry name" value="SUBTILISIN"/>
</dbReference>
<dbReference type="SUPFAM" id="SSF52743">
    <property type="entry name" value="Subtilisin-like"/>
    <property type="match status" value="1"/>
</dbReference>
<dbReference type="PROSITE" id="PS51892">
    <property type="entry name" value="SUBTILASE"/>
    <property type="match status" value="1"/>
</dbReference>
<dbReference type="PROSITE" id="PS00138">
    <property type="entry name" value="SUBTILASE_SER"/>
    <property type="match status" value="1"/>
</dbReference>
<proteinExistence type="evidence at transcript level"/>
<name>SBT4C_ARATH</name>
<evidence type="ECO:0000250" key="1">
    <source>
        <dbReference type="UniProtKB" id="Q39547"/>
    </source>
</evidence>
<evidence type="ECO:0000250" key="2">
    <source>
        <dbReference type="UniProtKB" id="Q84WS0"/>
    </source>
</evidence>
<evidence type="ECO:0000255" key="3"/>
<evidence type="ECO:0000255" key="4">
    <source>
        <dbReference type="PROSITE-ProRule" id="PRU00498"/>
    </source>
</evidence>
<evidence type="ECO:0000255" key="5">
    <source>
        <dbReference type="PROSITE-ProRule" id="PRU01240"/>
    </source>
</evidence>
<evidence type="ECO:0000255" key="6">
    <source>
        <dbReference type="PROSITE-ProRule" id="PRU10082"/>
    </source>
</evidence>
<evidence type="ECO:0000269" key="7">
    <source>
    </source>
</evidence>
<evidence type="ECO:0000303" key="8">
    <source>
    </source>
</evidence>
<evidence type="ECO:0000305" key="9"/>
<evidence type="ECO:0000312" key="10">
    <source>
        <dbReference type="Araport" id="AT5G59090"/>
    </source>
</evidence>
<evidence type="ECO:0000312" key="11">
    <source>
        <dbReference type="EMBL" id="AAM97000.1"/>
    </source>
</evidence>
<evidence type="ECO:0000312" key="12">
    <source>
        <dbReference type="EMBL" id="BAB10784.1"/>
    </source>
</evidence>